<accession>A3MLT7</accession>
<sequence>MITLTPGRLTLPQLRRIARENVQIALDPASFAAIDRGAQAVADIAAKGEPAYGINTGFGRLASTHIPHDQLELLQKNLVLSHAVGVGEPMARPVVRLLMALKLSSLGRGHSGIRRVVMDALVTLFNADVLPLIPVKGSVGASGDLAPLAHMSAVLLGIGDVFIRGERASAAEGLRVAGLAPLTLEAKEGLALLNGTQASTALALDNLFAIEDLYRTALVSGALSVDAAAGSVKPFDARIHELRGHRGQIDAAAAYRSLLDGSAINVSHRDCDKVQDPYSLRCQPQVMGACLDQIRHAAGVLLIEANAVSDNPLIFPDTGEVLSGGNFHAEPVAFAADNLAIAAAEIGALAERRIALLIDATLSGLPPFLVKDGGVNSGFMIAHVTAAALASENKTLAHPASVDSLPTSANQEDHVSMATFAARKLTDIAENVANILAIELLAAAQGVDLRAPHATSPALQHAMKTIRADVAHYDLDHYFAPDIAVVARRVRERAFATLSPLSFESEQ</sequence>
<evidence type="ECO:0000255" key="1">
    <source>
        <dbReference type="HAMAP-Rule" id="MF_00229"/>
    </source>
</evidence>
<protein>
    <recommendedName>
        <fullName evidence="1">Histidine ammonia-lyase</fullName>
        <shortName evidence="1">Histidase</shortName>
        <ecNumber evidence="1">4.3.1.3</ecNumber>
    </recommendedName>
</protein>
<name>HUTH_BURM7</name>
<comment type="catalytic activity">
    <reaction evidence="1">
        <text>L-histidine = trans-urocanate + NH4(+)</text>
        <dbReference type="Rhea" id="RHEA:21232"/>
        <dbReference type="ChEBI" id="CHEBI:17771"/>
        <dbReference type="ChEBI" id="CHEBI:28938"/>
        <dbReference type="ChEBI" id="CHEBI:57595"/>
        <dbReference type="EC" id="4.3.1.3"/>
    </reaction>
</comment>
<comment type="pathway">
    <text evidence="1">Amino-acid degradation; L-histidine degradation into L-glutamate; N-formimidoyl-L-glutamate from L-histidine: step 1/3.</text>
</comment>
<comment type="subcellular location">
    <subcellularLocation>
        <location evidence="1">Cytoplasm</location>
    </subcellularLocation>
</comment>
<comment type="PTM">
    <text evidence="1">Contains an active site 4-methylidene-imidazol-5-one (MIO), which is formed autocatalytically by cyclization and dehydration of residues Ala-Ser-Gly.</text>
</comment>
<comment type="similarity">
    <text evidence="1">Belongs to the PAL/histidase family.</text>
</comment>
<organism>
    <name type="scientific">Burkholderia mallei (strain NCTC 10247)</name>
    <dbReference type="NCBI Taxonomy" id="320389"/>
    <lineage>
        <taxon>Bacteria</taxon>
        <taxon>Pseudomonadati</taxon>
        <taxon>Pseudomonadota</taxon>
        <taxon>Betaproteobacteria</taxon>
        <taxon>Burkholderiales</taxon>
        <taxon>Burkholderiaceae</taxon>
        <taxon>Burkholderia</taxon>
        <taxon>pseudomallei group</taxon>
    </lineage>
</organism>
<dbReference type="EC" id="4.3.1.3" evidence="1"/>
<dbReference type="EMBL" id="CP000548">
    <property type="protein sequence ID" value="ABO06607.1"/>
    <property type="molecule type" value="Genomic_DNA"/>
</dbReference>
<dbReference type="RefSeq" id="WP_004192520.1">
    <property type="nucleotide sequence ID" value="NZ_CP007802.1"/>
</dbReference>
<dbReference type="SMR" id="A3MLT7"/>
<dbReference type="GeneID" id="92978410"/>
<dbReference type="KEGG" id="bmaz:BM44_1500"/>
<dbReference type="KEGG" id="bmn:BMA10247_1681"/>
<dbReference type="PATRIC" id="fig|320389.8.peg.1677"/>
<dbReference type="UniPathway" id="UPA00379">
    <property type="reaction ID" value="UER00549"/>
</dbReference>
<dbReference type="GO" id="GO:0005737">
    <property type="term" value="C:cytoplasm"/>
    <property type="evidence" value="ECO:0007669"/>
    <property type="project" value="UniProtKB-SubCell"/>
</dbReference>
<dbReference type="GO" id="GO:0004397">
    <property type="term" value="F:histidine ammonia-lyase activity"/>
    <property type="evidence" value="ECO:0007669"/>
    <property type="project" value="UniProtKB-UniRule"/>
</dbReference>
<dbReference type="GO" id="GO:0019556">
    <property type="term" value="P:L-histidine catabolic process to glutamate and formamide"/>
    <property type="evidence" value="ECO:0007669"/>
    <property type="project" value="UniProtKB-UniPathway"/>
</dbReference>
<dbReference type="GO" id="GO:0019557">
    <property type="term" value="P:L-histidine catabolic process to glutamate and formate"/>
    <property type="evidence" value="ECO:0007669"/>
    <property type="project" value="UniProtKB-UniPathway"/>
</dbReference>
<dbReference type="CDD" id="cd00332">
    <property type="entry name" value="PAL-HAL"/>
    <property type="match status" value="1"/>
</dbReference>
<dbReference type="FunFam" id="1.10.275.10:FF:000005">
    <property type="entry name" value="Histidine ammonia-lyase"/>
    <property type="match status" value="1"/>
</dbReference>
<dbReference type="FunFam" id="1.20.200.10:FF:000003">
    <property type="entry name" value="Histidine ammonia-lyase"/>
    <property type="match status" value="1"/>
</dbReference>
<dbReference type="Gene3D" id="1.20.200.10">
    <property type="entry name" value="Fumarase/aspartase (Central domain)"/>
    <property type="match status" value="1"/>
</dbReference>
<dbReference type="Gene3D" id="1.10.275.10">
    <property type="entry name" value="Fumarase/aspartase (N-terminal domain)"/>
    <property type="match status" value="1"/>
</dbReference>
<dbReference type="HAMAP" id="MF_00229">
    <property type="entry name" value="His_ammonia_lyase"/>
    <property type="match status" value="1"/>
</dbReference>
<dbReference type="InterPro" id="IPR001106">
    <property type="entry name" value="Aromatic_Lyase"/>
</dbReference>
<dbReference type="InterPro" id="IPR024083">
    <property type="entry name" value="Fumarase/histidase_N"/>
</dbReference>
<dbReference type="InterPro" id="IPR005921">
    <property type="entry name" value="HutH"/>
</dbReference>
<dbReference type="InterPro" id="IPR008948">
    <property type="entry name" value="L-Aspartase-like"/>
</dbReference>
<dbReference type="InterPro" id="IPR022313">
    <property type="entry name" value="Phe/His_NH3-lyase_AS"/>
</dbReference>
<dbReference type="NCBIfam" id="TIGR01225">
    <property type="entry name" value="hutH"/>
    <property type="match status" value="1"/>
</dbReference>
<dbReference type="NCBIfam" id="NF006871">
    <property type="entry name" value="PRK09367.1"/>
    <property type="match status" value="1"/>
</dbReference>
<dbReference type="PANTHER" id="PTHR10362">
    <property type="entry name" value="HISTIDINE AMMONIA-LYASE"/>
    <property type="match status" value="1"/>
</dbReference>
<dbReference type="Pfam" id="PF00221">
    <property type="entry name" value="Lyase_aromatic"/>
    <property type="match status" value="1"/>
</dbReference>
<dbReference type="SUPFAM" id="SSF48557">
    <property type="entry name" value="L-aspartase-like"/>
    <property type="match status" value="1"/>
</dbReference>
<dbReference type="PROSITE" id="PS00488">
    <property type="entry name" value="PAL_HISTIDASE"/>
    <property type="match status" value="1"/>
</dbReference>
<reference key="1">
    <citation type="journal article" date="2010" name="Genome Biol. Evol.">
        <title>Continuing evolution of Burkholderia mallei through genome reduction and large-scale rearrangements.</title>
        <authorList>
            <person name="Losada L."/>
            <person name="Ronning C.M."/>
            <person name="DeShazer D."/>
            <person name="Woods D."/>
            <person name="Fedorova N."/>
            <person name="Kim H.S."/>
            <person name="Shabalina S.A."/>
            <person name="Pearson T.R."/>
            <person name="Brinkac L."/>
            <person name="Tan P."/>
            <person name="Nandi T."/>
            <person name="Crabtree J."/>
            <person name="Badger J."/>
            <person name="Beckstrom-Sternberg S."/>
            <person name="Saqib M."/>
            <person name="Schutzer S.E."/>
            <person name="Keim P."/>
            <person name="Nierman W.C."/>
        </authorList>
    </citation>
    <scope>NUCLEOTIDE SEQUENCE [LARGE SCALE GENOMIC DNA]</scope>
    <source>
        <strain>NCTC 10247</strain>
    </source>
</reference>
<proteinExistence type="inferred from homology"/>
<feature type="chain" id="PRO_1000021550" description="Histidine ammonia-lyase">
    <location>
        <begin position="1"/>
        <end position="507"/>
    </location>
</feature>
<feature type="modified residue" description="2,3-didehydroalanine (Ser)" evidence="1">
    <location>
        <position position="142"/>
    </location>
</feature>
<feature type="cross-link" description="5-imidazolinone (Ala-Gly)" evidence="1">
    <location>
        <begin position="141"/>
        <end position="143"/>
    </location>
</feature>
<keyword id="KW-0963">Cytoplasm</keyword>
<keyword id="KW-0369">Histidine metabolism</keyword>
<keyword id="KW-0456">Lyase</keyword>
<gene>
    <name evidence="1" type="primary">hutH</name>
    <name type="ordered locus">BMA10247_1681</name>
</gene>